<accession>B0BB08</accession>
<reference key="1">
    <citation type="journal article" date="2008" name="Genome Res.">
        <title>Chlamydia trachomatis: genome sequence analysis of lymphogranuloma venereum isolates.</title>
        <authorList>
            <person name="Thomson N.R."/>
            <person name="Holden M.T.G."/>
            <person name="Carder C."/>
            <person name="Lennard N."/>
            <person name="Lockey S.J."/>
            <person name="Marsh P."/>
            <person name="Skipp P."/>
            <person name="O'Connor C.D."/>
            <person name="Goodhead I."/>
            <person name="Norbertzcak H."/>
            <person name="Harris B."/>
            <person name="Ormond D."/>
            <person name="Rance R."/>
            <person name="Quail M.A."/>
            <person name="Parkhill J."/>
            <person name="Stephens R.S."/>
            <person name="Clarke I.N."/>
        </authorList>
    </citation>
    <scope>NUCLEOTIDE SEQUENCE [LARGE SCALE GENOMIC DNA]</scope>
    <source>
        <strain>UCH-1/proctitis</strain>
    </source>
</reference>
<proteinExistence type="inferred from homology"/>
<feature type="chain" id="PRO_1000126796" description="Large ribosomal subunit protein bL31B">
    <location>
        <begin position="1"/>
        <end position="108"/>
    </location>
</feature>
<feature type="region of interest" description="Disordered" evidence="2">
    <location>
        <begin position="86"/>
        <end position="108"/>
    </location>
</feature>
<feature type="compositionally biased region" description="Basic residues" evidence="2">
    <location>
        <begin position="97"/>
        <end position="108"/>
    </location>
</feature>
<comment type="subunit">
    <text evidence="1">Part of the 50S ribosomal subunit.</text>
</comment>
<comment type="similarity">
    <text evidence="1">Belongs to the bacterial ribosomal protein bL31 family. Type B subfamily.</text>
</comment>
<organism>
    <name type="scientific">Chlamydia trachomatis serovar L2b (strain UCH-1/proctitis)</name>
    <dbReference type="NCBI Taxonomy" id="471473"/>
    <lineage>
        <taxon>Bacteria</taxon>
        <taxon>Pseudomonadati</taxon>
        <taxon>Chlamydiota</taxon>
        <taxon>Chlamydiia</taxon>
        <taxon>Chlamydiales</taxon>
        <taxon>Chlamydiaceae</taxon>
        <taxon>Chlamydia/Chlamydophila group</taxon>
        <taxon>Chlamydia</taxon>
    </lineage>
</organism>
<sequence>MKKNTHPEYRQVLFVDSSTGYKFVCGSTYQTDKTEVFEGQEYPVCYVSISSSSHPFFTGSKKLVDAEGRVDKFLKRYSGIKQSAPKPETVVEDVLPKGKKKSPAKKKK</sequence>
<dbReference type="EMBL" id="AM884177">
    <property type="protein sequence ID" value="CAP06670.1"/>
    <property type="molecule type" value="Genomic_DNA"/>
</dbReference>
<dbReference type="RefSeq" id="WP_009873500.1">
    <property type="nucleotide sequence ID" value="NC_010280.2"/>
</dbReference>
<dbReference type="SMR" id="B0BB08"/>
<dbReference type="KEGG" id="ctl:CTLon_0272"/>
<dbReference type="HOGENOM" id="CLU_114306_2_0_0"/>
<dbReference type="Proteomes" id="UP001154401">
    <property type="component" value="Chromosome"/>
</dbReference>
<dbReference type="GO" id="GO:1990904">
    <property type="term" value="C:ribonucleoprotein complex"/>
    <property type="evidence" value="ECO:0007669"/>
    <property type="project" value="UniProtKB-KW"/>
</dbReference>
<dbReference type="GO" id="GO:0005840">
    <property type="term" value="C:ribosome"/>
    <property type="evidence" value="ECO:0007669"/>
    <property type="project" value="UniProtKB-KW"/>
</dbReference>
<dbReference type="GO" id="GO:0003735">
    <property type="term" value="F:structural constituent of ribosome"/>
    <property type="evidence" value="ECO:0007669"/>
    <property type="project" value="InterPro"/>
</dbReference>
<dbReference type="GO" id="GO:0006412">
    <property type="term" value="P:translation"/>
    <property type="evidence" value="ECO:0007669"/>
    <property type="project" value="UniProtKB-UniRule"/>
</dbReference>
<dbReference type="Gene3D" id="4.10.830.30">
    <property type="entry name" value="Ribosomal protein L31"/>
    <property type="match status" value="1"/>
</dbReference>
<dbReference type="HAMAP" id="MF_00502">
    <property type="entry name" value="Ribosomal_bL31_2"/>
    <property type="match status" value="1"/>
</dbReference>
<dbReference type="InterPro" id="IPR034704">
    <property type="entry name" value="Ribosomal_bL28/bL31-like_sf"/>
</dbReference>
<dbReference type="InterPro" id="IPR002150">
    <property type="entry name" value="Ribosomal_bL31"/>
</dbReference>
<dbReference type="InterPro" id="IPR027493">
    <property type="entry name" value="Ribosomal_bL31_B"/>
</dbReference>
<dbReference type="InterPro" id="IPR042105">
    <property type="entry name" value="Ribosomal_bL31_sf"/>
</dbReference>
<dbReference type="NCBIfam" id="TIGR00105">
    <property type="entry name" value="L31"/>
    <property type="match status" value="1"/>
</dbReference>
<dbReference type="NCBIfam" id="NF002462">
    <property type="entry name" value="PRK01678.1"/>
    <property type="match status" value="1"/>
</dbReference>
<dbReference type="PANTHER" id="PTHR33280">
    <property type="entry name" value="50S RIBOSOMAL PROTEIN L31, CHLOROPLASTIC"/>
    <property type="match status" value="1"/>
</dbReference>
<dbReference type="PANTHER" id="PTHR33280:SF1">
    <property type="entry name" value="LARGE RIBOSOMAL SUBUNIT PROTEIN BL31C"/>
    <property type="match status" value="1"/>
</dbReference>
<dbReference type="Pfam" id="PF01197">
    <property type="entry name" value="Ribosomal_L31"/>
    <property type="match status" value="1"/>
</dbReference>
<dbReference type="PRINTS" id="PR01249">
    <property type="entry name" value="RIBOSOMALL31"/>
</dbReference>
<dbReference type="SUPFAM" id="SSF143800">
    <property type="entry name" value="L28p-like"/>
    <property type="match status" value="1"/>
</dbReference>
<dbReference type="PROSITE" id="PS01143">
    <property type="entry name" value="RIBOSOMAL_L31"/>
    <property type="match status" value="1"/>
</dbReference>
<protein>
    <recommendedName>
        <fullName evidence="1">Large ribosomal subunit protein bL31B</fullName>
    </recommendedName>
    <alternativeName>
        <fullName evidence="3">50S ribosomal protein L31 type B</fullName>
    </alternativeName>
</protein>
<evidence type="ECO:0000255" key="1">
    <source>
        <dbReference type="HAMAP-Rule" id="MF_00502"/>
    </source>
</evidence>
<evidence type="ECO:0000256" key="2">
    <source>
        <dbReference type="SAM" id="MobiDB-lite"/>
    </source>
</evidence>
<evidence type="ECO:0000305" key="3"/>
<gene>
    <name evidence="1" type="primary">rpmE2</name>
    <name type="ordered locus">CTLon_0272</name>
</gene>
<name>RL31B_CHLTB</name>
<keyword id="KW-0687">Ribonucleoprotein</keyword>
<keyword id="KW-0689">Ribosomal protein</keyword>